<keyword id="KW-0687">Ribonucleoprotein</keyword>
<keyword id="KW-0689">Ribosomal protein</keyword>
<keyword id="KW-0694">RNA-binding</keyword>
<keyword id="KW-0699">rRNA-binding</keyword>
<proteinExistence type="inferred from homology"/>
<evidence type="ECO:0000255" key="1">
    <source>
        <dbReference type="HAMAP-Rule" id="MF_01307"/>
    </source>
</evidence>
<evidence type="ECO:0000305" key="2"/>
<organism>
    <name type="scientific">Clostridium perfringens (strain ATCC 13124 / DSM 756 / JCM 1290 / NCIMB 6125 / NCTC 8237 / Type A)</name>
    <dbReference type="NCBI Taxonomy" id="195103"/>
    <lineage>
        <taxon>Bacteria</taxon>
        <taxon>Bacillati</taxon>
        <taxon>Bacillota</taxon>
        <taxon>Clostridia</taxon>
        <taxon>Eubacteriales</taxon>
        <taxon>Clostridiaceae</taxon>
        <taxon>Clostridium</taxon>
    </lineage>
</organism>
<protein>
    <recommendedName>
        <fullName evidence="1">Small ribosomal subunit protein uS5</fullName>
    </recommendedName>
    <alternativeName>
        <fullName evidence="2">30S ribosomal protein S5</fullName>
    </alternativeName>
</protein>
<comment type="function">
    <text evidence="1">With S4 and S12 plays an important role in translational accuracy.</text>
</comment>
<comment type="function">
    <text evidence="1">Located at the back of the 30S subunit body where it stabilizes the conformation of the head with respect to the body.</text>
</comment>
<comment type="subunit">
    <text evidence="1">Part of the 30S ribosomal subunit. Contacts proteins S4 and S8.</text>
</comment>
<comment type="domain">
    <text>The N-terminal domain interacts with the head of the 30S subunit; the C-terminal domain interacts with the body and contacts protein S4. The interaction surface between S4 and S5 is involved in control of translational fidelity.</text>
</comment>
<comment type="similarity">
    <text evidence="1">Belongs to the universal ribosomal protein uS5 family.</text>
</comment>
<reference key="1">
    <citation type="journal article" date="2006" name="Genome Res.">
        <title>Skewed genomic variability in strains of the toxigenic bacterial pathogen, Clostridium perfringens.</title>
        <authorList>
            <person name="Myers G.S.A."/>
            <person name="Rasko D.A."/>
            <person name="Cheung J.K."/>
            <person name="Ravel J."/>
            <person name="Seshadri R."/>
            <person name="DeBoy R.T."/>
            <person name="Ren Q."/>
            <person name="Varga J."/>
            <person name="Awad M.M."/>
            <person name="Brinkac L.M."/>
            <person name="Daugherty S.C."/>
            <person name="Haft D.H."/>
            <person name="Dodson R.J."/>
            <person name="Madupu R."/>
            <person name="Nelson W.C."/>
            <person name="Rosovitz M.J."/>
            <person name="Sullivan S.A."/>
            <person name="Khouri H."/>
            <person name="Dimitrov G.I."/>
            <person name="Watkins K.L."/>
            <person name="Mulligan S."/>
            <person name="Benton J."/>
            <person name="Radune D."/>
            <person name="Fisher D.J."/>
            <person name="Atkins H.S."/>
            <person name="Hiscox T."/>
            <person name="Jost B.H."/>
            <person name="Billington S.J."/>
            <person name="Songer J.G."/>
            <person name="McClane B.A."/>
            <person name="Titball R.W."/>
            <person name="Rood J.I."/>
            <person name="Melville S.B."/>
            <person name="Paulsen I.T."/>
        </authorList>
    </citation>
    <scope>NUCLEOTIDE SEQUENCE [LARGE SCALE GENOMIC DNA]</scope>
    <source>
        <strain>ATCC 13124 / DSM 756 / JCM 1290 / NCIMB 6125 / NCTC 8237 / S 107 / Type A</strain>
    </source>
</reference>
<accession>Q0TMR3</accession>
<name>RS5_CLOP1</name>
<sequence length="165" mass="17329">MRIDPSTLDLKEKVVSISRVTKVVKGGRNFRFSALVVVGDENGHVGVGTGKSIEIPEAIRKGIEDAKKNLVEVSIVGTTVPHEIHGKFGTGDVLIMPATEGTGVIAGGPARSVLELAGLKDVRAKSLGSNNPRNMVKATINGLANLRTAEDIAKLRGKSVEEIIG</sequence>
<dbReference type="EMBL" id="CP000246">
    <property type="protein sequence ID" value="ABG84089.1"/>
    <property type="molecule type" value="Genomic_DNA"/>
</dbReference>
<dbReference type="RefSeq" id="WP_003454272.1">
    <property type="nucleotide sequence ID" value="NC_008261.1"/>
</dbReference>
<dbReference type="SMR" id="Q0TMR3"/>
<dbReference type="STRING" id="195103.CPF_2697"/>
<dbReference type="PaxDb" id="195103-CPF_2697"/>
<dbReference type="GeneID" id="93001026"/>
<dbReference type="KEGG" id="cpf:CPF_2697"/>
<dbReference type="eggNOG" id="COG0098">
    <property type="taxonomic scope" value="Bacteria"/>
</dbReference>
<dbReference type="HOGENOM" id="CLU_065898_2_2_9"/>
<dbReference type="Proteomes" id="UP000001823">
    <property type="component" value="Chromosome"/>
</dbReference>
<dbReference type="GO" id="GO:0015935">
    <property type="term" value="C:small ribosomal subunit"/>
    <property type="evidence" value="ECO:0007669"/>
    <property type="project" value="InterPro"/>
</dbReference>
<dbReference type="GO" id="GO:0019843">
    <property type="term" value="F:rRNA binding"/>
    <property type="evidence" value="ECO:0007669"/>
    <property type="project" value="UniProtKB-UniRule"/>
</dbReference>
<dbReference type="GO" id="GO:0003735">
    <property type="term" value="F:structural constituent of ribosome"/>
    <property type="evidence" value="ECO:0007669"/>
    <property type="project" value="InterPro"/>
</dbReference>
<dbReference type="GO" id="GO:0006412">
    <property type="term" value="P:translation"/>
    <property type="evidence" value="ECO:0007669"/>
    <property type="project" value="UniProtKB-UniRule"/>
</dbReference>
<dbReference type="FunFam" id="3.30.160.20:FF:000001">
    <property type="entry name" value="30S ribosomal protein S5"/>
    <property type="match status" value="1"/>
</dbReference>
<dbReference type="FunFam" id="3.30.230.10:FF:000002">
    <property type="entry name" value="30S ribosomal protein S5"/>
    <property type="match status" value="1"/>
</dbReference>
<dbReference type="Gene3D" id="3.30.160.20">
    <property type="match status" value="1"/>
</dbReference>
<dbReference type="Gene3D" id="3.30.230.10">
    <property type="match status" value="1"/>
</dbReference>
<dbReference type="HAMAP" id="MF_01307_B">
    <property type="entry name" value="Ribosomal_uS5_B"/>
    <property type="match status" value="1"/>
</dbReference>
<dbReference type="InterPro" id="IPR020568">
    <property type="entry name" value="Ribosomal_Su5_D2-typ_SF"/>
</dbReference>
<dbReference type="InterPro" id="IPR000851">
    <property type="entry name" value="Ribosomal_uS5"/>
</dbReference>
<dbReference type="InterPro" id="IPR005712">
    <property type="entry name" value="Ribosomal_uS5_bac-type"/>
</dbReference>
<dbReference type="InterPro" id="IPR005324">
    <property type="entry name" value="Ribosomal_uS5_C"/>
</dbReference>
<dbReference type="InterPro" id="IPR013810">
    <property type="entry name" value="Ribosomal_uS5_N"/>
</dbReference>
<dbReference type="InterPro" id="IPR018192">
    <property type="entry name" value="Ribosomal_uS5_N_CS"/>
</dbReference>
<dbReference type="InterPro" id="IPR014721">
    <property type="entry name" value="Ribsml_uS5_D2-typ_fold_subgr"/>
</dbReference>
<dbReference type="NCBIfam" id="TIGR01021">
    <property type="entry name" value="rpsE_bact"/>
    <property type="match status" value="1"/>
</dbReference>
<dbReference type="PANTHER" id="PTHR48277">
    <property type="entry name" value="MITOCHONDRIAL RIBOSOMAL PROTEIN S5"/>
    <property type="match status" value="1"/>
</dbReference>
<dbReference type="PANTHER" id="PTHR48277:SF1">
    <property type="entry name" value="MITOCHONDRIAL RIBOSOMAL PROTEIN S5"/>
    <property type="match status" value="1"/>
</dbReference>
<dbReference type="Pfam" id="PF00333">
    <property type="entry name" value="Ribosomal_S5"/>
    <property type="match status" value="1"/>
</dbReference>
<dbReference type="Pfam" id="PF03719">
    <property type="entry name" value="Ribosomal_S5_C"/>
    <property type="match status" value="1"/>
</dbReference>
<dbReference type="SUPFAM" id="SSF54768">
    <property type="entry name" value="dsRNA-binding domain-like"/>
    <property type="match status" value="1"/>
</dbReference>
<dbReference type="SUPFAM" id="SSF54211">
    <property type="entry name" value="Ribosomal protein S5 domain 2-like"/>
    <property type="match status" value="1"/>
</dbReference>
<dbReference type="PROSITE" id="PS00585">
    <property type="entry name" value="RIBOSOMAL_S5"/>
    <property type="match status" value="1"/>
</dbReference>
<dbReference type="PROSITE" id="PS50881">
    <property type="entry name" value="S5_DSRBD"/>
    <property type="match status" value="1"/>
</dbReference>
<gene>
    <name evidence="1" type="primary">rpsE</name>
    <name type="ordered locus">CPF_2697</name>
</gene>
<feature type="chain" id="PRO_0000323112" description="Small ribosomal subunit protein uS5">
    <location>
        <begin position="1"/>
        <end position="165"/>
    </location>
</feature>
<feature type="domain" description="S5 DRBM" evidence="1">
    <location>
        <begin position="10"/>
        <end position="73"/>
    </location>
</feature>